<protein>
    <recommendedName>
        <fullName>Probable protein phosphatase 2C 37</fullName>
        <shortName>OsPP2C37</shortName>
        <ecNumber>3.1.3.16</ecNumber>
    </recommendedName>
</protein>
<feature type="chain" id="PRO_0000363284" description="Probable protein phosphatase 2C 37">
    <location>
        <begin position="1"/>
        <end position="474"/>
    </location>
</feature>
<feature type="domain" description="PPM-type phosphatase" evidence="2">
    <location>
        <begin position="113"/>
        <end position="470"/>
    </location>
</feature>
<feature type="region of interest" description="Disordered" evidence="3">
    <location>
        <begin position="1"/>
        <end position="90"/>
    </location>
</feature>
<feature type="region of interest" description="Disordered" evidence="3">
    <location>
        <begin position="406"/>
        <end position="434"/>
    </location>
</feature>
<feature type="compositionally biased region" description="Low complexity" evidence="3">
    <location>
        <begin position="57"/>
        <end position="77"/>
    </location>
</feature>
<feature type="compositionally biased region" description="Low complexity" evidence="3">
    <location>
        <begin position="420"/>
        <end position="434"/>
    </location>
</feature>
<feature type="binding site" evidence="1">
    <location>
        <position position="152"/>
    </location>
    <ligand>
        <name>Mn(2+)</name>
        <dbReference type="ChEBI" id="CHEBI:29035"/>
        <label>1</label>
    </ligand>
</feature>
<feature type="binding site" evidence="1">
    <location>
        <position position="152"/>
    </location>
    <ligand>
        <name>Mn(2+)</name>
        <dbReference type="ChEBI" id="CHEBI:29035"/>
        <label>2</label>
    </ligand>
</feature>
<feature type="binding site" evidence="1">
    <location>
        <position position="153"/>
    </location>
    <ligand>
        <name>Mn(2+)</name>
        <dbReference type="ChEBI" id="CHEBI:29035"/>
        <label>1</label>
    </ligand>
</feature>
<feature type="binding site" evidence="1">
    <location>
        <position position="387"/>
    </location>
    <ligand>
        <name>Mn(2+)</name>
        <dbReference type="ChEBI" id="CHEBI:29035"/>
        <label>2</label>
    </ligand>
</feature>
<feature type="binding site" evidence="1">
    <location>
        <position position="461"/>
    </location>
    <ligand>
        <name>Mn(2+)</name>
        <dbReference type="ChEBI" id="CHEBI:29035"/>
        <label>2</label>
    </ligand>
</feature>
<dbReference type="EC" id="3.1.3.16"/>
<dbReference type="EMBL" id="AL663013">
    <property type="protein sequence ID" value="CAE03844.1"/>
    <property type="status" value="ALT_SEQ"/>
    <property type="molecule type" value="Genomic_DNA"/>
</dbReference>
<dbReference type="EMBL" id="AP014960">
    <property type="status" value="NOT_ANNOTATED_CDS"/>
    <property type="molecule type" value="Genomic_DNA"/>
</dbReference>
<dbReference type="SMR" id="Q7XP01"/>
<dbReference type="FunCoup" id="Q7XP01">
    <property type="interactions" value="76"/>
</dbReference>
<dbReference type="STRING" id="39947.Q7XP01"/>
<dbReference type="PaxDb" id="39947-Q7XP01"/>
<dbReference type="eggNOG" id="KOG0698">
    <property type="taxonomic scope" value="Eukaryota"/>
</dbReference>
<dbReference type="InParanoid" id="Q7XP01"/>
<dbReference type="Proteomes" id="UP000000763">
    <property type="component" value="Chromosome 4"/>
</dbReference>
<dbReference type="Proteomes" id="UP000059680">
    <property type="component" value="Chromosome 4"/>
</dbReference>
<dbReference type="GO" id="GO:0046872">
    <property type="term" value="F:metal ion binding"/>
    <property type="evidence" value="ECO:0007669"/>
    <property type="project" value="UniProtKB-KW"/>
</dbReference>
<dbReference type="GO" id="GO:0004722">
    <property type="term" value="F:protein serine/threonine phosphatase activity"/>
    <property type="evidence" value="ECO:0000318"/>
    <property type="project" value="GO_Central"/>
</dbReference>
<dbReference type="GO" id="GO:1902531">
    <property type="term" value="P:regulation of intracellular signal transduction"/>
    <property type="evidence" value="ECO:0000318"/>
    <property type="project" value="GO_Central"/>
</dbReference>
<dbReference type="CDD" id="cd00143">
    <property type="entry name" value="PP2Cc"/>
    <property type="match status" value="1"/>
</dbReference>
<dbReference type="Gene3D" id="3.60.40.10">
    <property type="entry name" value="PPM-type phosphatase domain"/>
    <property type="match status" value="1"/>
</dbReference>
<dbReference type="InterPro" id="IPR015655">
    <property type="entry name" value="PP2C"/>
</dbReference>
<dbReference type="InterPro" id="IPR000222">
    <property type="entry name" value="PP2C_BS"/>
</dbReference>
<dbReference type="InterPro" id="IPR036457">
    <property type="entry name" value="PPM-type-like_dom_sf"/>
</dbReference>
<dbReference type="InterPro" id="IPR001932">
    <property type="entry name" value="PPM-type_phosphatase-like_dom"/>
</dbReference>
<dbReference type="PANTHER" id="PTHR47992">
    <property type="entry name" value="PROTEIN PHOSPHATASE"/>
    <property type="match status" value="1"/>
</dbReference>
<dbReference type="Pfam" id="PF00481">
    <property type="entry name" value="PP2C"/>
    <property type="match status" value="3"/>
</dbReference>
<dbReference type="SMART" id="SM00332">
    <property type="entry name" value="PP2Cc"/>
    <property type="match status" value="1"/>
</dbReference>
<dbReference type="SUPFAM" id="SSF81606">
    <property type="entry name" value="PP2C-like"/>
    <property type="match status" value="1"/>
</dbReference>
<dbReference type="PROSITE" id="PS01032">
    <property type="entry name" value="PPM_1"/>
    <property type="match status" value="1"/>
</dbReference>
<dbReference type="PROSITE" id="PS51746">
    <property type="entry name" value="PPM_2"/>
    <property type="match status" value="1"/>
</dbReference>
<comment type="catalytic activity">
    <reaction>
        <text>O-phospho-L-seryl-[protein] + H2O = L-seryl-[protein] + phosphate</text>
        <dbReference type="Rhea" id="RHEA:20629"/>
        <dbReference type="Rhea" id="RHEA-COMP:9863"/>
        <dbReference type="Rhea" id="RHEA-COMP:11604"/>
        <dbReference type="ChEBI" id="CHEBI:15377"/>
        <dbReference type="ChEBI" id="CHEBI:29999"/>
        <dbReference type="ChEBI" id="CHEBI:43474"/>
        <dbReference type="ChEBI" id="CHEBI:83421"/>
        <dbReference type="EC" id="3.1.3.16"/>
    </reaction>
</comment>
<comment type="catalytic activity">
    <reaction>
        <text>O-phospho-L-threonyl-[protein] + H2O = L-threonyl-[protein] + phosphate</text>
        <dbReference type="Rhea" id="RHEA:47004"/>
        <dbReference type="Rhea" id="RHEA-COMP:11060"/>
        <dbReference type="Rhea" id="RHEA-COMP:11605"/>
        <dbReference type="ChEBI" id="CHEBI:15377"/>
        <dbReference type="ChEBI" id="CHEBI:30013"/>
        <dbReference type="ChEBI" id="CHEBI:43474"/>
        <dbReference type="ChEBI" id="CHEBI:61977"/>
        <dbReference type="EC" id="3.1.3.16"/>
    </reaction>
</comment>
<comment type="cofactor">
    <cofactor evidence="1">
        <name>Mg(2+)</name>
        <dbReference type="ChEBI" id="CHEBI:18420"/>
    </cofactor>
    <cofactor evidence="1">
        <name>Mn(2+)</name>
        <dbReference type="ChEBI" id="CHEBI:29035"/>
    </cofactor>
    <text evidence="1">Binds 2 magnesium or manganese ions per subunit.</text>
</comment>
<comment type="similarity">
    <text evidence="4">Belongs to the PP2C family.</text>
</comment>
<comment type="sequence caution" evidence="4">
    <conflict type="erroneous gene model prediction">
        <sequence resource="EMBL-CDS" id="CAE03844"/>
    </conflict>
</comment>
<organism>
    <name type="scientific">Oryza sativa subsp. japonica</name>
    <name type="common">Rice</name>
    <dbReference type="NCBI Taxonomy" id="39947"/>
    <lineage>
        <taxon>Eukaryota</taxon>
        <taxon>Viridiplantae</taxon>
        <taxon>Streptophyta</taxon>
        <taxon>Embryophyta</taxon>
        <taxon>Tracheophyta</taxon>
        <taxon>Spermatophyta</taxon>
        <taxon>Magnoliopsida</taxon>
        <taxon>Liliopsida</taxon>
        <taxon>Poales</taxon>
        <taxon>Poaceae</taxon>
        <taxon>BOP clade</taxon>
        <taxon>Oryzoideae</taxon>
        <taxon>Oryzeae</taxon>
        <taxon>Oryzinae</taxon>
        <taxon>Oryza</taxon>
        <taxon>Oryza sativa</taxon>
    </lineage>
</organism>
<evidence type="ECO:0000250" key="1"/>
<evidence type="ECO:0000255" key="2">
    <source>
        <dbReference type="PROSITE-ProRule" id="PRU01082"/>
    </source>
</evidence>
<evidence type="ECO:0000256" key="3">
    <source>
        <dbReference type="SAM" id="MobiDB-lite"/>
    </source>
</evidence>
<evidence type="ECO:0000305" key="4"/>
<accession>Q7XP01</accession>
<sequence>MVMASAGVNMPGGDGDHPPAAAQECHRLRRRRYVPAAAAASEDGDNSSNGGGEKRSLPASSASPSPSPTSSAASSDCSSDRDDDGCSSTAGAAARRLPLPSGASTAAAVWPVAFGSVSLAGRMRDMEDAVSLRPSFCTWLDGSPMHFFAVFDGHGGPHVSALCREQMHVIVAEEMVAEAAALRQRQPAAMEEEEEERAVAGGAVAELRPGGRAGGGGVRVRARHRAGVPCPLSGQTGAIIGSTAVVALLVRDRLVVSNCGDSRAVLCRAGDPLPLSSDHKGLNPSLSWRGTRVALARGTWGDKTGQSVGPAALLLSGGAHPDRPDEKARIEAVGGRVVYLNGPRVRGILAMSRALGDKYLKPEVICEPDITITVRTVDDECLILASDGMWDVISNETASDVARQCLEDGSPTSGRRAARSGEAASSSAGAPAAAVGQESEPRCYRAAALLARLALGRESSDNISVVVIDLKGRG</sequence>
<reference key="1">
    <citation type="journal article" date="2002" name="Nature">
        <title>Sequence and analysis of rice chromosome 4.</title>
        <authorList>
            <person name="Feng Q."/>
            <person name="Zhang Y."/>
            <person name="Hao P."/>
            <person name="Wang S."/>
            <person name="Fu G."/>
            <person name="Huang Y."/>
            <person name="Li Y."/>
            <person name="Zhu J."/>
            <person name="Liu Y."/>
            <person name="Hu X."/>
            <person name="Jia P."/>
            <person name="Zhang Y."/>
            <person name="Zhao Q."/>
            <person name="Ying K."/>
            <person name="Yu S."/>
            <person name="Tang Y."/>
            <person name="Weng Q."/>
            <person name="Zhang L."/>
            <person name="Lu Y."/>
            <person name="Mu J."/>
            <person name="Lu Y."/>
            <person name="Zhang L.S."/>
            <person name="Yu Z."/>
            <person name="Fan D."/>
            <person name="Liu X."/>
            <person name="Lu T."/>
            <person name="Li C."/>
            <person name="Wu Y."/>
            <person name="Sun T."/>
            <person name="Lei H."/>
            <person name="Li T."/>
            <person name="Hu H."/>
            <person name="Guan J."/>
            <person name="Wu M."/>
            <person name="Zhang R."/>
            <person name="Zhou B."/>
            <person name="Chen Z."/>
            <person name="Chen L."/>
            <person name="Jin Z."/>
            <person name="Wang R."/>
            <person name="Yin H."/>
            <person name="Cai Z."/>
            <person name="Ren S."/>
            <person name="Lv G."/>
            <person name="Gu W."/>
            <person name="Zhu G."/>
            <person name="Tu Y."/>
            <person name="Jia J."/>
            <person name="Zhang Y."/>
            <person name="Chen J."/>
            <person name="Kang H."/>
            <person name="Chen X."/>
            <person name="Shao C."/>
            <person name="Sun Y."/>
            <person name="Hu Q."/>
            <person name="Zhang X."/>
            <person name="Zhang W."/>
            <person name="Wang L."/>
            <person name="Ding C."/>
            <person name="Sheng H."/>
            <person name="Gu J."/>
            <person name="Chen S."/>
            <person name="Ni L."/>
            <person name="Zhu F."/>
            <person name="Chen W."/>
            <person name="Lan L."/>
            <person name="Lai Y."/>
            <person name="Cheng Z."/>
            <person name="Gu M."/>
            <person name="Jiang J."/>
            <person name="Li J."/>
            <person name="Hong G."/>
            <person name="Xue Y."/>
            <person name="Han B."/>
        </authorList>
    </citation>
    <scope>NUCLEOTIDE SEQUENCE [LARGE SCALE GENOMIC DNA]</scope>
    <source>
        <strain>cv. Nipponbare</strain>
    </source>
</reference>
<reference key="2">
    <citation type="journal article" date="2005" name="Nature">
        <title>The map-based sequence of the rice genome.</title>
        <authorList>
            <consortium name="International rice genome sequencing project (IRGSP)"/>
        </authorList>
    </citation>
    <scope>NUCLEOTIDE SEQUENCE [LARGE SCALE GENOMIC DNA]</scope>
    <source>
        <strain>cv. Nipponbare</strain>
    </source>
</reference>
<reference key="3">
    <citation type="journal article" date="2013" name="Rice">
        <title>Improvement of the Oryza sativa Nipponbare reference genome using next generation sequence and optical map data.</title>
        <authorList>
            <person name="Kawahara Y."/>
            <person name="de la Bastide M."/>
            <person name="Hamilton J.P."/>
            <person name="Kanamori H."/>
            <person name="McCombie W.R."/>
            <person name="Ouyang S."/>
            <person name="Schwartz D.C."/>
            <person name="Tanaka T."/>
            <person name="Wu J."/>
            <person name="Zhou S."/>
            <person name="Childs K.L."/>
            <person name="Davidson R.M."/>
            <person name="Lin H."/>
            <person name="Quesada-Ocampo L."/>
            <person name="Vaillancourt B."/>
            <person name="Sakai H."/>
            <person name="Lee S.S."/>
            <person name="Kim J."/>
            <person name="Numa H."/>
            <person name="Itoh T."/>
            <person name="Buell C.R."/>
            <person name="Matsumoto T."/>
        </authorList>
    </citation>
    <scope>GENOME REANNOTATION</scope>
    <source>
        <strain>cv. Nipponbare</strain>
    </source>
</reference>
<reference key="4">
    <citation type="journal article" date="2008" name="BMC Genomics">
        <title>Genome-wide and expression analysis of protein phosphatase 2C in rice and Arabidopsis.</title>
        <authorList>
            <person name="Xue T."/>
            <person name="Wang D."/>
            <person name="Zhang S."/>
            <person name="Ehlting J."/>
            <person name="Ni F."/>
            <person name="Jacab S."/>
            <person name="Zheng C."/>
            <person name="Zhong Y."/>
        </authorList>
    </citation>
    <scope>GENE FAMILY</scope>
    <scope>NOMENCLATURE</scope>
</reference>
<name>P2C37_ORYSJ</name>
<proteinExistence type="inferred from homology"/>
<gene>
    <name type="ordered locus">Os04g0167900</name>
    <name type="ordered locus">LOC_Os04g08560</name>
    <name type="ORF">OSJNBb0089K06.2</name>
</gene>
<keyword id="KW-0378">Hydrolase</keyword>
<keyword id="KW-0460">Magnesium</keyword>
<keyword id="KW-0464">Manganese</keyword>
<keyword id="KW-0479">Metal-binding</keyword>
<keyword id="KW-0904">Protein phosphatase</keyword>
<keyword id="KW-1185">Reference proteome</keyword>